<evidence type="ECO:0000250" key="1"/>
<evidence type="ECO:0000250" key="2">
    <source>
        <dbReference type="UniProtKB" id="P0AB89"/>
    </source>
</evidence>
<evidence type="ECO:0000305" key="3"/>
<dbReference type="EC" id="4.3.2.2" evidence="2"/>
<dbReference type="EMBL" id="BX571857">
    <property type="protein sequence ID" value="CAG43636.1"/>
    <property type="molecule type" value="Genomic_DNA"/>
</dbReference>
<dbReference type="RefSeq" id="WP_000572878.1">
    <property type="nucleotide sequence ID" value="NC_002953.3"/>
</dbReference>
<dbReference type="SMR" id="Q6G825"/>
<dbReference type="KEGG" id="sas:SAS1831"/>
<dbReference type="HOGENOM" id="CLU_030949_0_1_9"/>
<dbReference type="UniPathway" id="UPA00074">
    <property type="reaction ID" value="UER00132"/>
</dbReference>
<dbReference type="UniPathway" id="UPA00075">
    <property type="reaction ID" value="UER00336"/>
</dbReference>
<dbReference type="GO" id="GO:0005829">
    <property type="term" value="C:cytosol"/>
    <property type="evidence" value="ECO:0007669"/>
    <property type="project" value="TreeGrafter"/>
</dbReference>
<dbReference type="GO" id="GO:0070626">
    <property type="term" value="F:(S)-2-(5-amino-1-(5-phospho-D-ribosyl)imidazole-4-carboxamido) succinate lyase (fumarate-forming) activity"/>
    <property type="evidence" value="ECO:0007669"/>
    <property type="project" value="TreeGrafter"/>
</dbReference>
<dbReference type="GO" id="GO:0004018">
    <property type="term" value="F:N6-(1,2-dicarboxyethyl)AMP AMP-lyase (fumarate-forming) activity"/>
    <property type="evidence" value="ECO:0007669"/>
    <property type="project" value="InterPro"/>
</dbReference>
<dbReference type="GO" id="GO:0044208">
    <property type="term" value="P:'de novo' AMP biosynthetic process"/>
    <property type="evidence" value="ECO:0007669"/>
    <property type="project" value="UniProtKB-UniPathway"/>
</dbReference>
<dbReference type="GO" id="GO:0006189">
    <property type="term" value="P:'de novo' IMP biosynthetic process"/>
    <property type="evidence" value="ECO:0007669"/>
    <property type="project" value="UniProtKB-UniPathway"/>
</dbReference>
<dbReference type="CDD" id="cd01360">
    <property type="entry name" value="Adenylsuccinate_lyase_1"/>
    <property type="match status" value="1"/>
</dbReference>
<dbReference type="FunFam" id="1.10.275.10:FF:000006">
    <property type="entry name" value="Adenylosuccinate lyase"/>
    <property type="match status" value="1"/>
</dbReference>
<dbReference type="FunFam" id="1.10.40.30:FF:000007">
    <property type="entry name" value="Adenylosuccinate lyase"/>
    <property type="match status" value="1"/>
</dbReference>
<dbReference type="FunFam" id="1.20.200.10:FF:000008">
    <property type="entry name" value="Adenylosuccinate lyase"/>
    <property type="match status" value="1"/>
</dbReference>
<dbReference type="Gene3D" id="1.10.40.30">
    <property type="entry name" value="Fumarase/aspartase (C-terminal domain)"/>
    <property type="match status" value="1"/>
</dbReference>
<dbReference type="Gene3D" id="1.20.200.10">
    <property type="entry name" value="Fumarase/aspartase (Central domain)"/>
    <property type="match status" value="1"/>
</dbReference>
<dbReference type="Gene3D" id="1.10.275.10">
    <property type="entry name" value="Fumarase/aspartase (N-terminal domain)"/>
    <property type="match status" value="1"/>
</dbReference>
<dbReference type="InterPro" id="IPR019468">
    <property type="entry name" value="AdenyloSucc_lyase_C"/>
</dbReference>
<dbReference type="InterPro" id="IPR024083">
    <property type="entry name" value="Fumarase/histidase_N"/>
</dbReference>
<dbReference type="InterPro" id="IPR020557">
    <property type="entry name" value="Fumarate_lyase_CS"/>
</dbReference>
<dbReference type="InterPro" id="IPR000362">
    <property type="entry name" value="Fumarate_lyase_fam"/>
</dbReference>
<dbReference type="InterPro" id="IPR022761">
    <property type="entry name" value="Fumarate_lyase_N"/>
</dbReference>
<dbReference type="InterPro" id="IPR008948">
    <property type="entry name" value="L-Aspartase-like"/>
</dbReference>
<dbReference type="InterPro" id="IPR004769">
    <property type="entry name" value="Pur_lyase"/>
</dbReference>
<dbReference type="NCBIfam" id="TIGR00928">
    <property type="entry name" value="purB"/>
    <property type="match status" value="1"/>
</dbReference>
<dbReference type="PANTHER" id="PTHR43172">
    <property type="entry name" value="ADENYLOSUCCINATE LYASE"/>
    <property type="match status" value="1"/>
</dbReference>
<dbReference type="PANTHER" id="PTHR43172:SF1">
    <property type="entry name" value="ADENYLOSUCCINATE LYASE"/>
    <property type="match status" value="1"/>
</dbReference>
<dbReference type="Pfam" id="PF10397">
    <property type="entry name" value="ADSL_C"/>
    <property type="match status" value="1"/>
</dbReference>
<dbReference type="Pfam" id="PF00206">
    <property type="entry name" value="Lyase_1"/>
    <property type="match status" value="1"/>
</dbReference>
<dbReference type="PRINTS" id="PR00145">
    <property type="entry name" value="ARGSUCLYASE"/>
</dbReference>
<dbReference type="PRINTS" id="PR00149">
    <property type="entry name" value="FUMRATELYASE"/>
</dbReference>
<dbReference type="SMART" id="SM00998">
    <property type="entry name" value="ADSL_C"/>
    <property type="match status" value="1"/>
</dbReference>
<dbReference type="SUPFAM" id="SSF48557">
    <property type="entry name" value="L-aspartase-like"/>
    <property type="match status" value="1"/>
</dbReference>
<dbReference type="PROSITE" id="PS00163">
    <property type="entry name" value="FUMARATE_LYASES"/>
    <property type="match status" value="1"/>
</dbReference>
<sequence length="431" mass="49603">MIERYSREEMSNIWTDQNRYEAWLEVEILACEAWSELGHIPKADVQKIRQNAKVNVERAQEIEQETRHDVVAFTRQVSETLGEERKWVHYGLTSTDVVDTALSFVIKQANDIIEKDLERFIDVLAEKAKNYKYTLMMGRTHGVHAEPTTFGVKMALWYTEMQRNLQRFKQVREEIEVGKMSGAVGTFANIPPEIESYVCKHLGIGTAPVSTQTLQRDRHAYYIATLALIATSLEKFAVEIRNLQKTETREVEEAFAKGQKGSSAMPHKRNPIGSENITGISRVIRGYITTAYENVPLWHERDISHSSAERIMLPDVTIALDYALNRFTNIVDRLTVFEDNMRNNIDKTFGLIFSQRVLLALINKGMVREEAYDKVQPKAMISWETKTPFRELIEQDESITSVLTKEELDECFDPKHHLNQVDTIFERAGLA</sequence>
<comment type="function">
    <text evidence="2">Catalyzes two reactions in de novo purine nucleotide biosynthesis. Catalyzes the breakdown of 5-aminoimidazole- (N-succinylocarboxamide) ribotide (SAICAR or 2-[5-amino-1-(5-phospho-beta-D-ribosyl)imidazole-4-carboxamido]succinate) to 5-aminoimidazole-4-carboxamide ribotide (AICAR or 5-amino-1-(5-phospho-beta-D-ribosyl)imidazole-4-carboxamide) and fumarate, and of adenylosuccinate (ADS or N(6)-(1,2-dicarboxyethyl)-AMP) to adenosine monophosphate (AMP) and fumarate.</text>
</comment>
<comment type="catalytic activity">
    <reaction evidence="2">
        <text>N(6)-(1,2-dicarboxyethyl)-AMP = fumarate + AMP</text>
        <dbReference type="Rhea" id="RHEA:16853"/>
        <dbReference type="ChEBI" id="CHEBI:29806"/>
        <dbReference type="ChEBI" id="CHEBI:57567"/>
        <dbReference type="ChEBI" id="CHEBI:456215"/>
        <dbReference type="EC" id="4.3.2.2"/>
    </reaction>
    <physiologicalReaction direction="left-to-right" evidence="2">
        <dbReference type="Rhea" id="RHEA:16854"/>
    </physiologicalReaction>
</comment>
<comment type="catalytic activity">
    <reaction evidence="2">
        <text>(2S)-2-[5-amino-1-(5-phospho-beta-D-ribosyl)imidazole-4-carboxamido]succinate = 5-amino-1-(5-phospho-beta-D-ribosyl)imidazole-4-carboxamide + fumarate</text>
        <dbReference type="Rhea" id="RHEA:23920"/>
        <dbReference type="ChEBI" id="CHEBI:29806"/>
        <dbReference type="ChEBI" id="CHEBI:58443"/>
        <dbReference type="ChEBI" id="CHEBI:58475"/>
        <dbReference type="EC" id="4.3.2.2"/>
    </reaction>
    <physiologicalReaction direction="left-to-right" evidence="2">
        <dbReference type="Rhea" id="RHEA:23921"/>
    </physiologicalReaction>
</comment>
<comment type="pathway">
    <text>Purine metabolism; AMP biosynthesis via de novo pathway; AMP from IMP: step 2/2.</text>
</comment>
<comment type="pathway">
    <text>Purine metabolism; IMP biosynthesis via de novo pathway; 5-amino-1-(5-phospho-D-ribosyl)imidazole-4-carboxamide from 5-amino-1-(5-phospho-D-ribosyl)imidazole-4-carboxylate: step 2/2.</text>
</comment>
<comment type="subunit">
    <text evidence="1">Homodimer and homotetramer. Residues from neighboring subunits contribute catalytic and substrate-binding residues to each active site (By similarity).</text>
</comment>
<comment type="similarity">
    <text evidence="3">Belongs to the lyase 1 family. Adenylosuccinate lyase subfamily.</text>
</comment>
<accession>Q6G825</accession>
<reference key="1">
    <citation type="journal article" date="2004" name="Proc. Natl. Acad. Sci. U.S.A.">
        <title>Complete genomes of two clinical Staphylococcus aureus strains: evidence for the rapid evolution of virulence and drug resistance.</title>
        <authorList>
            <person name="Holden M.T.G."/>
            <person name="Feil E.J."/>
            <person name="Lindsay J.A."/>
            <person name="Peacock S.J."/>
            <person name="Day N.P.J."/>
            <person name="Enright M.C."/>
            <person name="Foster T.J."/>
            <person name="Moore C.E."/>
            <person name="Hurst L."/>
            <person name="Atkin R."/>
            <person name="Barron A."/>
            <person name="Bason N."/>
            <person name="Bentley S.D."/>
            <person name="Chillingworth C."/>
            <person name="Chillingworth T."/>
            <person name="Churcher C."/>
            <person name="Clark L."/>
            <person name="Corton C."/>
            <person name="Cronin A."/>
            <person name="Doggett J."/>
            <person name="Dowd L."/>
            <person name="Feltwell T."/>
            <person name="Hance Z."/>
            <person name="Harris B."/>
            <person name="Hauser H."/>
            <person name="Holroyd S."/>
            <person name="Jagels K."/>
            <person name="James K.D."/>
            <person name="Lennard N."/>
            <person name="Line A."/>
            <person name="Mayes R."/>
            <person name="Moule S."/>
            <person name="Mungall K."/>
            <person name="Ormond D."/>
            <person name="Quail M.A."/>
            <person name="Rabbinowitsch E."/>
            <person name="Rutherford K.M."/>
            <person name="Sanders M."/>
            <person name="Sharp S."/>
            <person name="Simmonds M."/>
            <person name="Stevens K."/>
            <person name="Whitehead S."/>
            <person name="Barrell B.G."/>
            <person name="Spratt B.G."/>
            <person name="Parkhill J."/>
        </authorList>
    </citation>
    <scope>NUCLEOTIDE SEQUENCE [LARGE SCALE GENOMIC DNA]</scope>
    <source>
        <strain>MSSA476</strain>
    </source>
</reference>
<proteinExistence type="inferred from homology"/>
<organism>
    <name type="scientific">Staphylococcus aureus (strain MSSA476)</name>
    <dbReference type="NCBI Taxonomy" id="282459"/>
    <lineage>
        <taxon>Bacteria</taxon>
        <taxon>Bacillati</taxon>
        <taxon>Bacillota</taxon>
        <taxon>Bacilli</taxon>
        <taxon>Bacillales</taxon>
        <taxon>Staphylococcaceae</taxon>
        <taxon>Staphylococcus</taxon>
    </lineage>
</organism>
<protein>
    <recommendedName>
        <fullName>Adenylosuccinate lyase</fullName>
        <shortName>ASL</shortName>
        <ecNumber evidence="2">4.3.2.2</ecNumber>
    </recommendedName>
    <alternativeName>
        <fullName>Adenylosuccinase</fullName>
        <shortName>ASase</shortName>
    </alternativeName>
</protein>
<gene>
    <name type="primary">purB</name>
    <name type="ordered locus">SAS1831</name>
</gene>
<name>PUR8_STAAS</name>
<feature type="chain" id="PRO_0000259976" description="Adenylosuccinate lyase">
    <location>
        <begin position="1"/>
        <end position="431"/>
    </location>
</feature>
<feature type="active site" description="Proton donor/acceptor" evidence="2">
    <location>
        <position position="141"/>
    </location>
</feature>
<feature type="active site" description="Proton donor/acceptor" evidence="2">
    <location>
        <position position="262"/>
    </location>
</feature>
<feature type="binding site" evidence="2">
    <location>
        <begin position="4"/>
        <end position="5"/>
    </location>
    <ligand>
        <name>N(6)-(1,2-dicarboxyethyl)-AMP</name>
        <dbReference type="ChEBI" id="CHEBI:57567"/>
    </ligand>
</feature>
<feature type="binding site" evidence="2">
    <location>
        <begin position="67"/>
        <end position="69"/>
    </location>
    <ligand>
        <name>N(6)-(1,2-dicarboxyethyl)-AMP</name>
        <dbReference type="ChEBI" id="CHEBI:57567"/>
    </ligand>
</feature>
<feature type="binding site" evidence="2">
    <location>
        <begin position="93"/>
        <end position="94"/>
    </location>
    <ligand>
        <name>N(6)-(1,2-dicarboxyethyl)-AMP</name>
        <dbReference type="ChEBI" id="CHEBI:57567"/>
    </ligand>
</feature>
<feature type="binding site" evidence="2">
    <location>
        <position position="212"/>
    </location>
    <ligand>
        <name>N(6)-(1,2-dicarboxyethyl)-AMP</name>
        <dbReference type="ChEBI" id="CHEBI:57567"/>
    </ligand>
</feature>
<feature type="binding site" evidence="2">
    <location>
        <position position="263"/>
    </location>
    <ligand>
        <name>N(6)-(1,2-dicarboxyethyl)-AMP</name>
        <dbReference type="ChEBI" id="CHEBI:57567"/>
    </ligand>
</feature>
<feature type="binding site" evidence="2">
    <location>
        <begin position="268"/>
        <end position="270"/>
    </location>
    <ligand>
        <name>N(6)-(1,2-dicarboxyethyl)-AMP</name>
        <dbReference type="ChEBI" id="CHEBI:57567"/>
    </ligand>
</feature>
<feature type="binding site" evidence="2">
    <location>
        <position position="276"/>
    </location>
    <ligand>
        <name>N(6)-(1,2-dicarboxyethyl)-AMP</name>
        <dbReference type="ChEBI" id="CHEBI:57567"/>
    </ligand>
</feature>
<feature type="binding site" evidence="2">
    <location>
        <begin position="307"/>
        <end position="311"/>
    </location>
    <ligand>
        <name>N(6)-(1,2-dicarboxyethyl)-AMP</name>
        <dbReference type="ChEBI" id="CHEBI:57567"/>
    </ligand>
</feature>
<keyword id="KW-0456">Lyase</keyword>
<keyword id="KW-0658">Purine biosynthesis</keyword>